<gene>
    <name evidence="1" type="primary">astE</name>
    <name type="ordered locus">YPTB1963</name>
</gene>
<name>ASTE_YERPS</name>
<dbReference type="EC" id="3.5.1.96" evidence="1"/>
<dbReference type="EMBL" id="BX936398">
    <property type="protein sequence ID" value="CAH21201.1"/>
    <property type="status" value="ALT_INIT"/>
    <property type="molecule type" value="Genomic_DNA"/>
</dbReference>
<dbReference type="RefSeq" id="WP_002212028.1">
    <property type="nucleotide sequence ID" value="NZ_CP009712.1"/>
</dbReference>
<dbReference type="SMR" id="Q66B17"/>
<dbReference type="GeneID" id="49786048"/>
<dbReference type="KEGG" id="ypo:BZ17_506"/>
<dbReference type="KEGG" id="yps:YPTB1963"/>
<dbReference type="PATRIC" id="fig|273123.14.peg.541"/>
<dbReference type="UniPathway" id="UPA00185">
    <property type="reaction ID" value="UER00283"/>
</dbReference>
<dbReference type="Proteomes" id="UP000001011">
    <property type="component" value="Chromosome"/>
</dbReference>
<dbReference type="GO" id="GO:0016788">
    <property type="term" value="F:hydrolase activity, acting on ester bonds"/>
    <property type="evidence" value="ECO:0007669"/>
    <property type="project" value="UniProtKB-UniRule"/>
</dbReference>
<dbReference type="GO" id="GO:0009017">
    <property type="term" value="F:succinylglutamate desuccinylase activity"/>
    <property type="evidence" value="ECO:0007669"/>
    <property type="project" value="UniProtKB-EC"/>
</dbReference>
<dbReference type="GO" id="GO:0008270">
    <property type="term" value="F:zinc ion binding"/>
    <property type="evidence" value="ECO:0007669"/>
    <property type="project" value="UniProtKB-UniRule"/>
</dbReference>
<dbReference type="GO" id="GO:0019544">
    <property type="term" value="P:arginine catabolic process to glutamate"/>
    <property type="evidence" value="ECO:0007669"/>
    <property type="project" value="UniProtKB-UniRule"/>
</dbReference>
<dbReference type="GO" id="GO:0019545">
    <property type="term" value="P:arginine catabolic process to succinate"/>
    <property type="evidence" value="ECO:0007669"/>
    <property type="project" value="UniProtKB-UniRule"/>
</dbReference>
<dbReference type="CDD" id="cd03855">
    <property type="entry name" value="M14_ASTE"/>
    <property type="match status" value="1"/>
</dbReference>
<dbReference type="FunFam" id="3.40.630.10:FF:000017">
    <property type="entry name" value="Succinylglutamate desuccinylase"/>
    <property type="match status" value="1"/>
</dbReference>
<dbReference type="Gene3D" id="3.40.630.10">
    <property type="entry name" value="Zn peptidases"/>
    <property type="match status" value="1"/>
</dbReference>
<dbReference type="HAMAP" id="MF_00767">
    <property type="entry name" value="Arg_catab_AstE"/>
    <property type="match status" value="1"/>
</dbReference>
<dbReference type="InterPro" id="IPR050178">
    <property type="entry name" value="AspA/AstE_fam"/>
</dbReference>
<dbReference type="InterPro" id="IPR055438">
    <property type="entry name" value="AstE_AspA_cat"/>
</dbReference>
<dbReference type="InterPro" id="IPR007036">
    <property type="entry name" value="Aste_AspA_hybrid_dom"/>
</dbReference>
<dbReference type="InterPro" id="IPR016681">
    <property type="entry name" value="SuccinylGlu_desuccinylase"/>
</dbReference>
<dbReference type="NCBIfam" id="TIGR03242">
    <property type="entry name" value="arg_catab_astE"/>
    <property type="match status" value="1"/>
</dbReference>
<dbReference type="NCBIfam" id="NF003706">
    <property type="entry name" value="PRK05324.1"/>
    <property type="match status" value="1"/>
</dbReference>
<dbReference type="PANTHER" id="PTHR15162">
    <property type="entry name" value="ASPARTOACYLASE"/>
    <property type="match status" value="1"/>
</dbReference>
<dbReference type="PANTHER" id="PTHR15162:SF7">
    <property type="entry name" value="SUCCINYLGLUTAMATE DESUCCINYLASE"/>
    <property type="match status" value="1"/>
</dbReference>
<dbReference type="Pfam" id="PF24827">
    <property type="entry name" value="AstE_AspA_cat"/>
    <property type="match status" value="1"/>
</dbReference>
<dbReference type="Pfam" id="PF04952">
    <property type="entry name" value="AstE_AspA_hybrid"/>
    <property type="match status" value="1"/>
</dbReference>
<dbReference type="PIRSF" id="PIRSF017020">
    <property type="entry name" value="AstE"/>
    <property type="match status" value="1"/>
</dbReference>
<dbReference type="SUPFAM" id="SSF53187">
    <property type="entry name" value="Zn-dependent exopeptidases"/>
    <property type="match status" value="1"/>
</dbReference>
<proteinExistence type="inferred from homology"/>
<feature type="chain" id="PRO_0000257725" description="Succinylglutamate desuccinylase">
    <location>
        <begin position="1"/>
        <end position="330"/>
    </location>
</feature>
<feature type="active site" evidence="1">
    <location>
        <position position="210"/>
    </location>
</feature>
<feature type="binding site" evidence="1">
    <location>
        <position position="53"/>
    </location>
    <ligand>
        <name>Zn(2+)</name>
        <dbReference type="ChEBI" id="CHEBI:29105"/>
    </ligand>
</feature>
<feature type="binding site" evidence="1">
    <location>
        <position position="56"/>
    </location>
    <ligand>
        <name>Zn(2+)</name>
        <dbReference type="ChEBI" id="CHEBI:29105"/>
    </ligand>
</feature>
<feature type="binding site" evidence="1">
    <location>
        <position position="147"/>
    </location>
    <ligand>
        <name>Zn(2+)</name>
        <dbReference type="ChEBI" id="CHEBI:29105"/>
    </ligand>
</feature>
<accession>Q66B17</accession>
<organism>
    <name type="scientific">Yersinia pseudotuberculosis serotype I (strain IP32953)</name>
    <dbReference type="NCBI Taxonomy" id="273123"/>
    <lineage>
        <taxon>Bacteria</taxon>
        <taxon>Pseudomonadati</taxon>
        <taxon>Pseudomonadota</taxon>
        <taxon>Gammaproteobacteria</taxon>
        <taxon>Enterobacterales</taxon>
        <taxon>Yersiniaceae</taxon>
        <taxon>Yersinia</taxon>
    </lineage>
</organism>
<protein>
    <recommendedName>
        <fullName evidence="1">Succinylglutamate desuccinylase</fullName>
        <ecNumber evidence="1">3.5.1.96</ecNumber>
    </recommendedName>
</protein>
<comment type="function">
    <text evidence="1">Transforms N(2)-succinylglutamate into succinate and glutamate.</text>
</comment>
<comment type="catalytic activity">
    <reaction evidence="1">
        <text>N-succinyl-L-glutamate + H2O = L-glutamate + succinate</text>
        <dbReference type="Rhea" id="RHEA:15169"/>
        <dbReference type="ChEBI" id="CHEBI:15377"/>
        <dbReference type="ChEBI" id="CHEBI:29985"/>
        <dbReference type="ChEBI" id="CHEBI:30031"/>
        <dbReference type="ChEBI" id="CHEBI:58763"/>
        <dbReference type="EC" id="3.5.1.96"/>
    </reaction>
</comment>
<comment type="cofactor">
    <cofactor evidence="1">
        <name>Zn(2+)</name>
        <dbReference type="ChEBI" id="CHEBI:29105"/>
    </cofactor>
    <text evidence="1">Binds 1 zinc ion per subunit.</text>
</comment>
<comment type="pathway">
    <text evidence="1">Amino-acid degradation; L-arginine degradation via AST pathway; L-glutamate and succinate from L-arginine: step 5/5.</text>
</comment>
<comment type="similarity">
    <text evidence="1">Belongs to the AspA/AstE family. Succinylglutamate desuccinylase subfamily.</text>
</comment>
<comment type="sequence caution" evidence="2">
    <conflict type="erroneous initiation">
        <sequence resource="EMBL-CDS" id="CAH21201"/>
    </conflict>
</comment>
<evidence type="ECO:0000255" key="1">
    <source>
        <dbReference type="HAMAP-Rule" id="MF_00767"/>
    </source>
</evidence>
<evidence type="ECO:0000305" key="2"/>
<keyword id="KW-0056">Arginine metabolism</keyword>
<keyword id="KW-0378">Hydrolase</keyword>
<keyword id="KW-0479">Metal-binding</keyword>
<keyword id="KW-0862">Zinc</keyword>
<reference key="1">
    <citation type="journal article" date="2004" name="Proc. Natl. Acad. Sci. U.S.A.">
        <title>Insights into the evolution of Yersinia pestis through whole-genome comparison with Yersinia pseudotuberculosis.</title>
        <authorList>
            <person name="Chain P.S.G."/>
            <person name="Carniel E."/>
            <person name="Larimer F.W."/>
            <person name="Lamerdin J."/>
            <person name="Stoutland P.O."/>
            <person name="Regala W.M."/>
            <person name="Georgescu A.M."/>
            <person name="Vergez L.M."/>
            <person name="Land M.L."/>
            <person name="Motin V.L."/>
            <person name="Brubaker R.R."/>
            <person name="Fowler J."/>
            <person name="Hinnebusch J."/>
            <person name="Marceau M."/>
            <person name="Medigue C."/>
            <person name="Simonet M."/>
            <person name="Chenal-Francisque V."/>
            <person name="Souza B."/>
            <person name="Dacheux D."/>
            <person name="Elliott J.M."/>
            <person name="Derbise A."/>
            <person name="Hauser L.J."/>
            <person name="Garcia E."/>
        </authorList>
    </citation>
    <scope>NUCLEOTIDE SEQUENCE [LARGE SCALE GENOMIC DNA]</scope>
    <source>
        <strain>IP32953</strain>
    </source>
</reference>
<sequence>MLDFLAITLSGKPPQVIQGETVNLKWQWLGEGILTLVPHRSYTQSVVISAGIHGNETAPIEILNQLVTDLLAGQLPLSVRLLVLLGNPPAIRKGKRYLSNDINRMFGGRYQHYTPSDETRRASTLEQRVMAFFQASHTSERLHYDLHTAIRGSYHPRFGLLPYQQTPYSAAMFRWLRDIELDALVMHTSAGGTFAHFSSERCQAASCTLELGKALPFGENQLSQFSAITQGLRSLVSDSALPARKTENMKYYRVVKSLLRQHPDFKLRVAEDTVNFTRFAQGTLLTEQPNDNYRVEHPYEWILFPNPHVALGLRAGMMLVKMCESELPIT</sequence>